<dbReference type="EMBL" id="BX897700">
    <property type="protein sequence ID" value="CAF26039.1"/>
    <property type="molecule type" value="Genomic_DNA"/>
</dbReference>
<dbReference type="RefSeq" id="WP_011179313.1">
    <property type="nucleotide sequence ID" value="NC_005955.1"/>
</dbReference>
<dbReference type="SMR" id="Q6G004"/>
<dbReference type="KEGG" id="bqu:BQ05440"/>
<dbReference type="eggNOG" id="COG0781">
    <property type="taxonomic scope" value="Bacteria"/>
</dbReference>
<dbReference type="HOGENOM" id="CLU_087843_4_0_5"/>
<dbReference type="OrthoDB" id="9797817at2"/>
<dbReference type="Proteomes" id="UP000000597">
    <property type="component" value="Chromosome"/>
</dbReference>
<dbReference type="GO" id="GO:0005829">
    <property type="term" value="C:cytosol"/>
    <property type="evidence" value="ECO:0007669"/>
    <property type="project" value="TreeGrafter"/>
</dbReference>
<dbReference type="GO" id="GO:0003723">
    <property type="term" value="F:RNA binding"/>
    <property type="evidence" value="ECO:0007669"/>
    <property type="project" value="UniProtKB-UniRule"/>
</dbReference>
<dbReference type="GO" id="GO:0006353">
    <property type="term" value="P:DNA-templated transcription termination"/>
    <property type="evidence" value="ECO:0007669"/>
    <property type="project" value="UniProtKB-UniRule"/>
</dbReference>
<dbReference type="GO" id="GO:0031564">
    <property type="term" value="P:transcription antitermination"/>
    <property type="evidence" value="ECO:0007669"/>
    <property type="project" value="UniProtKB-KW"/>
</dbReference>
<dbReference type="Gene3D" id="1.10.940.10">
    <property type="entry name" value="NusB-like"/>
    <property type="match status" value="1"/>
</dbReference>
<dbReference type="HAMAP" id="MF_00073">
    <property type="entry name" value="NusB"/>
    <property type="match status" value="1"/>
</dbReference>
<dbReference type="InterPro" id="IPR035926">
    <property type="entry name" value="NusB-like_sf"/>
</dbReference>
<dbReference type="InterPro" id="IPR011605">
    <property type="entry name" value="NusB_fam"/>
</dbReference>
<dbReference type="InterPro" id="IPR006027">
    <property type="entry name" value="NusB_RsmB_TIM44"/>
</dbReference>
<dbReference type="NCBIfam" id="TIGR01951">
    <property type="entry name" value="nusB"/>
    <property type="match status" value="1"/>
</dbReference>
<dbReference type="PANTHER" id="PTHR11078:SF3">
    <property type="entry name" value="ANTITERMINATION NUSB DOMAIN-CONTAINING PROTEIN"/>
    <property type="match status" value="1"/>
</dbReference>
<dbReference type="PANTHER" id="PTHR11078">
    <property type="entry name" value="N UTILIZATION SUBSTANCE PROTEIN B-RELATED"/>
    <property type="match status" value="1"/>
</dbReference>
<dbReference type="Pfam" id="PF01029">
    <property type="entry name" value="NusB"/>
    <property type="match status" value="1"/>
</dbReference>
<dbReference type="SUPFAM" id="SSF48013">
    <property type="entry name" value="NusB-like"/>
    <property type="match status" value="1"/>
</dbReference>
<evidence type="ECO:0000255" key="1">
    <source>
        <dbReference type="HAMAP-Rule" id="MF_00073"/>
    </source>
</evidence>
<proteinExistence type="inferred from homology"/>
<reference key="1">
    <citation type="journal article" date="2004" name="Proc. Natl. Acad. Sci. U.S.A.">
        <title>The louse-borne human pathogen Bartonella quintana is a genomic derivative of the zoonotic agent Bartonella henselae.</title>
        <authorList>
            <person name="Alsmark U.C.M."/>
            <person name="Frank A.C."/>
            <person name="Karlberg E.O."/>
            <person name="Legault B.-A."/>
            <person name="Ardell D.H."/>
            <person name="Canbaeck B."/>
            <person name="Eriksson A.-S."/>
            <person name="Naeslund A.K."/>
            <person name="Handley S.A."/>
            <person name="Huvet M."/>
            <person name="La Scola B."/>
            <person name="Holmberg M."/>
            <person name="Andersson S.G.E."/>
        </authorList>
    </citation>
    <scope>NUCLEOTIDE SEQUENCE [LARGE SCALE GENOMIC DNA]</scope>
    <source>
        <strain>Toulouse</strain>
    </source>
</reference>
<comment type="function">
    <text evidence="1">Involved in transcription antitermination. Required for transcription of ribosomal RNA (rRNA) genes. Binds specifically to the boxA antiterminator sequence of the ribosomal RNA (rrn) operons.</text>
</comment>
<comment type="similarity">
    <text evidence="1">Belongs to the NusB family.</text>
</comment>
<protein>
    <recommendedName>
        <fullName evidence="1">Transcription antitermination protein NusB</fullName>
    </recommendedName>
    <alternativeName>
        <fullName evidence="1">Antitermination factor NusB</fullName>
    </alternativeName>
</protein>
<keyword id="KW-0694">RNA-binding</keyword>
<keyword id="KW-0804">Transcription</keyword>
<keyword id="KW-0889">Transcription antitermination</keyword>
<keyword id="KW-0805">Transcription regulation</keyword>
<sequence>MADIKGKYSPRLANKRGAARLAAVQALYQMDIVGSGVMETAAEYEAYHLEKNIDGNQYLDADFQWFLAIITGVVKDQKQLDPMLHQQLSAEWSLSRLDSILRAILRAGLWELINRQDVPIAVVMNEYVDIAKAFFEGDEPKLVNAVLDSMAKKIRL</sequence>
<name>NUSB_BARQU</name>
<organism>
    <name type="scientific">Bartonella quintana (strain Toulouse)</name>
    <name type="common">Rochalimaea quintana</name>
    <dbReference type="NCBI Taxonomy" id="283165"/>
    <lineage>
        <taxon>Bacteria</taxon>
        <taxon>Pseudomonadati</taxon>
        <taxon>Pseudomonadota</taxon>
        <taxon>Alphaproteobacteria</taxon>
        <taxon>Hyphomicrobiales</taxon>
        <taxon>Bartonellaceae</taxon>
        <taxon>Bartonella</taxon>
    </lineage>
</organism>
<gene>
    <name evidence="1" type="primary">nusB</name>
    <name type="ordered locus">BQ05440</name>
</gene>
<accession>Q6G004</accession>
<feature type="chain" id="PRO_0000265487" description="Transcription antitermination protein NusB">
    <location>
        <begin position="1"/>
        <end position="156"/>
    </location>
</feature>